<organism>
    <name type="scientific">Macaca fascicularis</name>
    <name type="common">Crab-eating macaque</name>
    <name type="synonym">Cynomolgus monkey</name>
    <dbReference type="NCBI Taxonomy" id="9541"/>
    <lineage>
        <taxon>Eukaryota</taxon>
        <taxon>Metazoa</taxon>
        <taxon>Chordata</taxon>
        <taxon>Craniata</taxon>
        <taxon>Vertebrata</taxon>
        <taxon>Euteleostomi</taxon>
        <taxon>Mammalia</taxon>
        <taxon>Eutheria</taxon>
        <taxon>Euarchontoglires</taxon>
        <taxon>Primates</taxon>
        <taxon>Haplorrhini</taxon>
        <taxon>Catarrhini</taxon>
        <taxon>Cercopithecidae</taxon>
        <taxon>Cercopithecinae</taxon>
        <taxon>Macaca</taxon>
    </lineage>
</organism>
<evidence type="ECO:0000250" key="1"/>
<evidence type="ECO:0000250" key="2">
    <source>
        <dbReference type="UniProtKB" id="Q7TQI8"/>
    </source>
</evidence>
<evidence type="ECO:0000250" key="3">
    <source>
        <dbReference type="UniProtKB" id="Q9H2G4"/>
    </source>
</evidence>
<evidence type="ECO:0000256" key="4">
    <source>
        <dbReference type="SAM" id="MobiDB-lite"/>
    </source>
</evidence>
<evidence type="ECO:0000269" key="5">
    <source>
    </source>
</evidence>
<evidence type="ECO:0000303" key="6">
    <source ref="1"/>
</evidence>
<evidence type="ECO:0000305" key="7"/>
<sequence length="695" mass="79653">MDRPDEGPPAKTRRLSSSESPQRDPPPPPPPPPLLRLPLPPPQQRPRLQEETEAAQVLADMRGVGLGPALPPPPPYVILEEGGVRAYFTLGAECPGWDSTIESGYGEAPPPTESLEALPTPEVSGGSLEIDFEVVQPSSFGGEGALETCSAVGWGPQRLIDPKSKEEAIIIVEDEDEDEQESMRSSRRRRRRRRRKQRKVKRESRQRNAERMESILQALEDIQLDLEAVNIKAGKAFLRLKRKFIQMRRPFLERRDLIIQHIPGFWVKAFLNHPRIPILINRRDEDIFRYLTNLQVQDLRHISMGYKMKLYFQTNPYFTNMVIVKEFQRNRSGRLVSHSTPIRWHRGQEPQARRHGNQDASHSFFSWFSNHSLPEADRIAEIIKNDLWVNPLRYYLRERGSRIKRKKQEMKKRKTRGRCEVVIMEDAPDYYAVEDIFSEISDIDETIHDIKISDFMETTDYFETTDNEITDINENICDSESPDHDEVRNETTDNNESADDNETTDNNESADDNNENPEDNNKNADDNKENPDNNKHTYGNNFFNGGFWGSHGNNQDSSDSDNEADEASDDEDNDGNEGDNEGSDDDGNEGDNEGSDDDDRDIEYYEKVIEDPFDRDQDDYEDVIEIISDESVEEEEGIVEGIEQDEDVYQEEGNYEGEGNEDVWEEGEDSDDSDLEDVLQVPNGWANPGKRGKTG</sequence>
<proteinExistence type="evidence at protein level"/>
<dbReference type="EMBL" id="AB056806">
    <property type="protein sequence ID" value="BAB39330.1"/>
    <property type="molecule type" value="mRNA"/>
</dbReference>
<dbReference type="EMBL" id="AB063061">
    <property type="protein sequence ID" value="BAB60783.1"/>
    <property type="molecule type" value="mRNA"/>
</dbReference>
<dbReference type="EMBL" id="AB169870">
    <property type="protein sequence ID" value="BAE01951.1"/>
    <property type="molecule type" value="mRNA"/>
</dbReference>
<dbReference type="RefSeq" id="NP_001270585.1">
    <property type="nucleotide sequence ID" value="NM_001283656.1"/>
</dbReference>
<dbReference type="SMR" id="Q9BE64"/>
<dbReference type="STRING" id="9541.ENSMFAP00000035798"/>
<dbReference type="eggNOG" id="KOG1508">
    <property type="taxonomic scope" value="Eukaryota"/>
</dbReference>
<dbReference type="Proteomes" id="UP000233100">
    <property type="component" value="Unplaced"/>
</dbReference>
<dbReference type="GO" id="GO:0005737">
    <property type="term" value="C:cytoplasm"/>
    <property type="evidence" value="ECO:0007669"/>
    <property type="project" value="UniProtKB-SubCell"/>
</dbReference>
<dbReference type="GO" id="GO:0005730">
    <property type="term" value="C:nucleolus"/>
    <property type="evidence" value="ECO:0000250"/>
    <property type="project" value="UniProtKB"/>
</dbReference>
<dbReference type="GO" id="GO:0005634">
    <property type="term" value="C:nucleus"/>
    <property type="evidence" value="ECO:0000250"/>
    <property type="project" value="UniProtKB"/>
</dbReference>
<dbReference type="GO" id="GO:0030308">
    <property type="term" value="P:negative regulation of cell growth"/>
    <property type="evidence" value="ECO:0000250"/>
    <property type="project" value="UniProtKB"/>
</dbReference>
<dbReference type="GO" id="GO:0008156">
    <property type="term" value="P:negative regulation of DNA replication"/>
    <property type="evidence" value="ECO:0000250"/>
    <property type="project" value="UniProtKB"/>
</dbReference>
<dbReference type="GO" id="GO:0006334">
    <property type="term" value="P:nucleosome assembly"/>
    <property type="evidence" value="ECO:0007669"/>
    <property type="project" value="InterPro"/>
</dbReference>
<dbReference type="GO" id="GO:0045859">
    <property type="term" value="P:regulation of protein kinase activity"/>
    <property type="evidence" value="ECO:0000250"/>
    <property type="project" value="UniProtKB"/>
</dbReference>
<dbReference type="FunFam" id="1.20.5.1500:FF:000006">
    <property type="entry name" value="Testis-specific Y-encoded-like protein 2"/>
    <property type="match status" value="1"/>
</dbReference>
<dbReference type="FunFam" id="3.30.1120.90:FF:000002">
    <property type="entry name" value="Testis-specific Y-encoded-like protein 2"/>
    <property type="match status" value="1"/>
</dbReference>
<dbReference type="Gene3D" id="1.20.5.1500">
    <property type="match status" value="1"/>
</dbReference>
<dbReference type="Gene3D" id="3.30.1120.90">
    <property type="entry name" value="Nucleosome assembly protein"/>
    <property type="match status" value="1"/>
</dbReference>
<dbReference type="InterPro" id="IPR037231">
    <property type="entry name" value="NAP-like_sf"/>
</dbReference>
<dbReference type="InterPro" id="IPR002164">
    <property type="entry name" value="NAP_family"/>
</dbReference>
<dbReference type="PANTHER" id="PTHR11875">
    <property type="entry name" value="TESTIS-SPECIFIC Y-ENCODED PROTEIN"/>
    <property type="match status" value="1"/>
</dbReference>
<dbReference type="Pfam" id="PF00956">
    <property type="entry name" value="NAP"/>
    <property type="match status" value="1"/>
</dbReference>
<dbReference type="SUPFAM" id="SSF143113">
    <property type="entry name" value="NAP-like"/>
    <property type="match status" value="1"/>
</dbReference>
<protein>
    <recommendedName>
        <fullName>Testis-specific Y-encoded-like protein 2</fullName>
        <shortName>TSPY-like protein 2</shortName>
    </recommendedName>
    <alternativeName>
        <fullName>Differentially-expressed nucleolar TGF-beta1 target protein</fullName>
    </alternativeName>
</protein>
<reference key="1">
    <citation type="submission" date="2001-03" db="EMBL/GenBank/DDBJ databases">
        <title>Isolation of full-length cDNA clones from macaque brain cDNA libraries.</title>
        <authorList>
            <person name="Osada N."/>
            <person name="Hida M."/>
            <person name="Kusuda J."/>
            <person name="Tanuma R."/>
            <person name="Iseki K."/>
            <person name="Hirai M."/>
            <person name="Terao K."/>
            <person name="Suzuki Y."/>
            <person name="Sugano S."/>
            <person name="Hashimoto K."/>
        </authorList>
    </citation>
    <scope>NUCLEOTIDE SEQUENCE [LARGE SCALE MRNA] (ISOFORMS 1 AND 2)</scope>
    <source>
        <tissue>Frontal cortex</tissue>
        <tissue>Medulla oblongata</tissue>
    </source>
</reference>
<reference key="2">
    <citation type="submission" date="2005-06" db="EMBL/GenBank/DDBJ databases">
        <title>DNA sequences of macaque genes expressed in brain or testis and its evolutionary implications.</title>
        <authorList>
            <consortium name="International consortium for macaque cDNA sequencing and analysis"/>
        </authorList>
    </citation>
    <scope>NUCLEOTIDE SEQUENCE [LARGE SCALE MRNA] (ISOFORM 1)</scope>
    <source>
        <tissue>Frontal cortex</tissue>
    </source>
</reference>
<reference key="3">
    <citation type="journal article" date="2005" name="Biochim. Biophys. Acta">
        <title>Differentially expressed nucleolar TGF-beta1 target (DENTT) shows tissue-specific nuclear and cytoplasmic localization and increases TGF-beta1-responsive transcription in primates.</title>
        <authorList>
            <person name="Ozbun L.L."/>
            <person name="Martinez A."/>
            <person name="Jakowlew S.B."/>
        </authorList>
    </citation>
    <scope>IDENTIFICATION</scope>
    <scope>TISSUE SPECIFICITY</scope>
    <scope>INDUCTION</scope>
    <scope>SUBCELLULAR LOCATION</scope>
</reference>
<gene>
    <name type="primary">TSPYL2</name>
    <name type="synonym">DENTT</name>
    <name type="ORF">QflA-11354</name>
    <name type="ORF">QflA-13812</name>
    <name type="ORF">QmoA-12404</name>
</gene>
<keyword id="KW-0025">Alternative splicing</keyword>
<keyword id="KW-0131">Cell cycle</keyword>
<keyword id="KW-0156">Chromatin regulator</keyword>
<keyword id="KW-0963">Cytoplasm</keyword>
<keyword id="KW-1017">Isopeptide bond</keyword>
<keyword id="KW-0539">Nucleus</keyword>
<keyword id="KW-0597">Phosphoprotein</keyword>
<keyword id="KW-1185">Reference proteome</keyword>
<keyword id="KW-0804">Transcription</keyword>
<keyword id="KW-0805">Transcription regulation</keyword>
<keyword id="KW-0832">Ubl conjugation</keyword>
<accession>Q9BE64</accession>
<accession>Q4R4M4</accession>
<accession>Q95K93</accession>
<feature type="chain" id="PRO_0000289101" description="Testis-specific Y-encoded-like protein 2">
    <location>
        <begin position="1"/>
        <end position="695"/>
    </location>
</feature>
<feature type="region of interest" description="Disordered" evidence="4">
    <location>
        <begin position="1"/>
        <end position="56"/>
    </location>
</feature>
<feature type="region of interest" description="Disordered" evidence="4">
    <location>
        <begin position="175"/>
        <end position="207"/>
    </location>
</feature>
<feature type="region of interest" description="Disordered" evidence="4">
    <location>
        <begin position="471"/>
        <end position="603"/>
    </location>
</feature>
<feature type="region of interest" description="Disordered" evidence="4">
    <location>
        <begin position="632"/>
        <end position="695"/>
    </location>
</feature>
<feature type="compositionally biased region" description="Pro residues" evidence="4">
    <location>
        <begin position="23"/>
        <end position="44"/>
    </location>
</feature>
<feature type="compositionally biased region" description="Basic residues" evidence="4">
    <location>
        <begin position="185"/>
        <end position="202"/>
    </location>
</feature>
<feature type="compositionally biased region" description="Basic and acidic residues" evidence="4">
    <location>
        <begin position="481"/>
        <end position="491"/>
    </location>
</feature>
<feature type="compositionally biased region" description="Acidic residues" evidence="4">
    <location>
        <begin position="496"/>
        <end position="518"/>
    </location>
</feature>
<feature type="compositionally biased region" description="Basic and acidic residues" evidence="4">
    <location>
        <begin position="519"/>
        <end position="535"/>
    </location>
</feature>
<feature type="compositionally biased region" description="Low complexity" evidence="4">
    <location>
        <begin position="539"/>
        <end position="557"/>
    </location>
</feature>
<feature type="compositionally biased region" description="Acidic residues" evidence="4">
    <location>
        <begin position="558"/>
        <end position="601"/>
    </location>
</feature>
<feature type="compositionally biased region" description="Acidic residues" evidence="4">
    <location>
        <begin position="632"/>
        <end position="677"/>
    </location>
</feature>
<feature type="modified residue" description="Phosphoserine" evidence="3">
    <location>
        <position position="18"/>
    </location>
</feature>
<feature type="modified residue" description="Phosphoserine" evidence="3">
    <location>
        <position position="20"/>
    </location>
</feature>
<feature type="modified residue" description="Phosphothreonine" evidence="3">
    <location>
        <position position="340"/>
    </location>
</feature>
<feature type="modified residue" description="Phosphoserine" evidence="2">
    <location>
        <position position="670"/>
    </location>
</feature>
<feature type="modified residue" description="Phosphoserine" evidence="2">
    <location>
        <position position="673"/>
    </location>
</feature>
<feature type="cross-link" description="Glycyl lysine isopeptide (Lys-Gly) (interchain with G-Cter in SUMO2)" evidence="3">
    <location>
        <position position="11"/>
    </location>
</feature>
<feature type="cross-link" description="Glycyl lysine isopeptide (Lys-Gly) (interchain with G-Cter in SUMO2)" evidence="3">
    <location>
        <position position="163"/>
    </location>
</feature>
<feature type="cross-link" description="Glycyl lysine isopeptide (Lys-Gly) (interchain with G-Cter in SUMO2)" evidence="3">
    <location>
        <position position="165"/>
    </location>
</feature>
<feature type="splice variant" id="VSP_025896" description="In isoform 2." evidence="6">
    <location>
        <begin position="179"/>
        <end position="376"/>
    </location>
</feature>
<feature type="sequence conflict" description="In Ref. 2; BAE01951." evidence="7" ref="2">
    <original>K</original>
    <variation>E</variation>
    <location>
        <position position="268"/>
    </location>
</feature>
<feature type="sequence conflict" description="In Ref. 2; BAE01951." evidence="7" ref="2">
    <original>P</original>
    <variation>S</variation>
    <location>
        <position position="277"/>
    </location>
</feature>
<feature type="sequence conflict" description="In Ref. 2; BAE01951." evidence="7" ref="2">
    <original>E</original>
    <variation>G</variation>
    <location>
        <position position="445"/>
    </location>
</feature>
<feature type="sequence conflict" description="In Ref. 1; BAB60783." evidence="7" ref="1">
    <original>L</original>
    <variation>P</variation>
    <location>
        <position position="679"/>
    </location>
</feature>
<name>TSYL2_MACFA</name>
<comment type="function">
    <text evidence="1">Part of the CASK/TBR1/TSPYL2 transcriptional complex which modulates gene expression in response to neuronal synaptic activity, probably by facilitating nucleosome assembly. May inhibit cell proliferation by inducing p53-dependent CDKN1A expression (By similarity).</text>
</comment>
<comment type="subunit">
    <text evidence="1">Interacts with histones. Interacts with CASK. Part of a complex containing CASK, TBR1 and TSPYL2 (By similarity).</text>
</comment>
<comment type="subcellular location">
    <subcellularLocation>
        <location evidence="5">Nucleus</location>
    </subcellularLocation>
    <subcellularLocation>
        <location evidence="5">Cytoplasm</location>
    </subcellularLocation>
    <text evidence="1">Enriched in transcriptionally active regions of chromatin in neurons.</text>
</comment>
<comment type="alternative products">
    <event type="alternative splicing"/>
    <isoform>
        <id>Q9BE64-1</id>
        <name>1</name>
        <sequence type="displayed"/>
    </isoform>
    <isoform>
        <id>Q9BE64-2</id>
        <name>2</name>
        <sequence type="described" ref="VSP_025896"/>
    </isoform>
</comment>
<comment type="tissue specificity">
    <text evidence="5">Ubiquitously expressed, with highest levels in testis, adrenal gland, cerebral cortex, ovary, skeletal muscle and spleen. Present in testis, adrenal gland, cerebral cortex and ovary (at protein level).</text>
</comment>
<comment type="induction">
    <text evidence="5">By TGFB1 and all-trans retinoic acid in lung cells (at protein level).</text>
</comment>
<comment type="PTM">
    <text evidence="1">Phosphorylation at Ser-20 and/or Thr-340 impairs function on cell proliferation.</text>
</comment>
<comment type="miscellaneous">
    <text evidence="1">Synaptic activity down-regulates TSPYL2 protein levels by inducing rapid proteasomal degradation.</text>
</comment>
<comment type="miscellaneous">
    <text evidence="1">Subject to X inactivation.</text>
</comment>
<comment type="similarity">
    <text evidence="7">Belongs to the nucleosome assembly protein (NAP) family.</text>
</comment>